<organism>
    <name type="scientific">Escherichia coli O17:K52:H18 (strain UMN026 / ExPEC)</name>
    <dbReference type="NCBI Taxonomy" id="585056"/>
    <lineage>
        <taxon>Bacteria</taxon>
        <taxon>Pseudomonadati</taxon>
        <taxon>Pseudomonadota</taxon>
        <taxon>Gammaproteobacteria</taxon>
        <taxon>Enterobacterales</taxon>
        <taxon>Enterobacteriaceae</taxon>
        <taxon>Escherichia</taxon>
    </lineage>
</organism>
<sequence length="326" mass="36136">MAFTPFPPRQPTASARLPLTLITLDDWALATITGADSEKYMQGQVTADVSQMTEDQHLLAAHCDAKGKMWSNLRLFRDGDGFAWIERRSVREPQLTELKKYAVFSKVTIAPDDERVLLGVAGFQARAALANLFSELPSKEKQVVKEGATTLLWFEHPAERFLIVTDEATANMLTDKLRGEAELNNSQQWLALNIEAGFPVIDAANSGQFIPQATNLQALGGISFKKGCYTGQEMVARAKFRGANKRALWLLTGSASRLPEAGEDLELKMGENWRRTGTVLAAVKLEDGQVVVQVVMNNDMEPDSIFRVRDDANTLHIEPLPYSLEE</sequence>
<name>YGFZ_ECOLU</name>
<protein>
    <recommendedName>
        <fullName evidence="1">tRNA-modifying protein YgfZ</fullName>
    </recommendedName>
</protein>
<reference key="1">
    <citation type="journal article" date="2009" name="PLoS Genet.">
        <title>Organised genome dynamics in the Escherichia coli species results in highly diverse adaptive paths.</title>
        <authorList>
            <person name="Touchon M."/>
            <person name="Hoede C."/>
            <person name="Tenaillon O."/>
            <person name="Barbe V."/>
            <person name="Baeriswyl S."/>
            <person name="Bidet P."/>
            <person name="Bingen E."/>
            <person name="Bonacorsi S."/>
            <person name="Bouchier C."/>
            <person name="Bouvet O."/>
            <person name="Calteau A."/>
            <person name="Chiapello H."/>
            <person name="Clermont O."/>
            <person name="Cruveiller S."/>
            <person name="Danchin A."/>
            <person name="Diard M."/>
            <person name="Dossat C."/>
            <person name="Karoui M.E."/>
            <person name="Frapy E."/>
            <person name="Garry L."/>
            <person name="Ghigo J.M."/>
            <person name="Gilles A.M."/>
            <person name="Johnson J."/>
            <person name="Le Bouguenec C."/>
            <person name="Lescat M."/>
            <person name="Mangenot S."/>
            <person name="Martinez-Jehanne V."/>
            <person name="Matic I."/>
            <person name="Nassif X."/>
            <person name="Oztas S."/>
            <person name="Petit M.A."/>
            <person name="Pichon C."/>
            <person name="Rouy Z."/>
            <person name="Ruf C.S."/>
            <person name="Schneider D."/>
            <person name="Tourret J."/>
            <person name="Vacherie B."/>
            <person name="Vallenet D."/>
            <person name="Medigue C."/>
            <person name="Rocha E.P.C."/>
            <person name="Denamur E."/>
        </authorList>
    </citation>
    <scope>NUCLEOTIDE SEQUENCE [LARGE SCALE GENOMIC DNA]</scope>
    <source>
        <strain>UMN026 / ExPEC</strain>
    </source>
</reference>
<keyword id="KW-0963">Cytoplasm</keyword>
<keyword id="KW-0290">Folate-binding</keyword>
<keyword id="KW-0819">tRNA processing</keyword>
<feature type="chain" id="PRO_1000138074" description="tRNA-modifying protein YgfZ">
    <location>
        <begin position="1"/>
        <end position="326"/>
    </location>
</feature>
<feature type="binding site" evidence="1">
    <location>
        <position position="27"/>
    </location>
    <ligand>
        <name>folate</name>
        <dbReference type="ChEBI" id="CHEBI:62501"/>
    </ligand>
</feature>
<feature type="binding site" evidence="1">
    <location>
        <position position="189"/>
    </location>
    <ligand>
        <name>folate</name>
        <dbReference type="ChEBI" id="CHEBI:62501"/>
    </ligand>
</feature>
<proteinExistence type="inferred from homology"/>
<gene>
    <name evidence="1" type="primary">ygfZ</name>
    <name type="ordered locus">ECUMN_3240</name>
</gene>
<accession>B7N7E2</accession>
<comment type="function">
    <text evidence="1">Folate-binding protein involved in regulating the level of ATP-DnaA and in the modification of some tRNAs. It is probably a key factor in regulatory networks that act via tRNA modification, such as initiation of chromosomal replication.</text>
</comment>
<comment type="subcellular location">
    <subcellularLocation>
        <location evidence="1">Cytoplasm</location>
    </subcellularLocation>
</comment>
<comment type="similarity">
    <text evidence="1">Belongs to the tRNA-modifying YgfZ family.</text>
</comment>
<dbReference type="EMBL" id="CU928163">
    <property type="protein sequence ID" value="CAR14404.1"/>
    <property type="molecule type" value="Genomic_DNA"/>
</dbReference>
<dbReference type="RefSeq" id="WP_000886049.1">
    <property type="nucleotide sequence ID" value="NC_011751.1"/>
</dbReference>
<dbReference type="RefSeq" id="YP_002413923.1">
    <property type="nucleotide sequence ID" value="NC_011751.1"/>
</dbReference>
<dbReference type="SMR" id="B7N7E2"/>
<dbReference type="STRING" id="585056.ECUMN_3240"/>
<dbReference type="KEGG" id="eum:ECUMN_3240"/>
<dbReference type="PATRIC" id="fig|585056.7.peg.3417"/>
<dbReference type="HOGENOM" id="CLU_007884_6_1_6"/>
<dbReference type="Proteomes" id="UP000007097">
    <property type="component" value="Chromosome"/>
</dbReference>
<dbReference type="GO" id="GO:0005737">
    <property type="term" value="C:cytoplasm"/>
    <property type="evidence" value="ECO:0007669"/>
    <property type="project" value="UniProtKB-SubCell"/>
</dbReference>
<dbReference type="GO" id="GO:0005542">
    <property type="term" value="F:folic acid binding"/>
    <property type="evidence" value="ECO:0007669"/>
    <property type="project" value="UniProtKB-UniRule"/>
</dbReference>
<dbReference type="GO" id="GO:0016226">
    <property type="term" value="P:iron-sulfur cluster assembly"/>
    <property type="evidence" value="ECO:0007669"/>
    <property type="project" value="TreeGrafter"/>
</dbReference>
<dbReference type="GO" id="GO:0009451">
    <property type="term" value="P:RNA modification"/>
    <property type="evidence" value="ECO:0007669"/>
    <property type="project" value="InterPro"/>
</dbReference>
<dbReference type="GO" id="GO:0008033">
    <property type="term" value="P:tRNA processing"/>
    <property type="evidence" value="ECO:0007669"/>
    <property type="project" value="UniProtKB-UniRule"/>
</dbReference>
<dbReference type="FunFam" id="2.40.30.160:FF:000001">
    <property type="entry name" value="tRNA-modifying protein YgfZ"/>
    <property type="match status" value="1"/>
</dbReference>
<dbReference type="FunFam" id="3.30.70.1400:FF:000002">
    <property type="entry name" value="tRNA-modifying protein YgfZ"/>
    <property type="match status" value="1"/>
</dbReference>
<dbReference type="FunFam" id="3.30.70.1630:FF:000001">
    <property type="entry name" value="tRNA-modifying protein YgfZ"/>
    <property type="match status" value="1"/>
</dbReference>
<dbReference type="Gene3D" id="2.40.30.160">
    <property type="match status" value="1"/>
</dbReference>
<dbReference type="Gene3D" id="3.30.70.1630">
    <property type="match status" value="1"/>
</dbReference>
<dbReference type="Gene3D" id="3.30.70.1400">
    <property type="entry name" value="Aminomethyltransferase beta-barrel domains"/>
    <property type="match status" value="1"/>
</dbReference>
<dbReference type="HAMAP" id="MF_01175">
    <property type="entry name" value="tRNA_modifying_YgfZ"/>
    <property type="match status" value="1"/>
</dbReference>
<dbReference type="InterPro" id="IPR006222">
    <property type="entry name" value="GCV_T_N"/>
</dbReference>
<dbReference type="InterPro" id="IPR029043">
    <property type="entry name" value="GcvT/YgfZ_C"/>
</dbReference>
<dbReference type="InterPro" id="IPR023758">
    <property type="entry name" value="tRNA-modifying_YgfZ"/>
</dbReference>
<dbReference type="InterPro" id="IPR045179">
    <property type="entry name" value="YgfZ/GcvT"/>
</dbReference>
<dbReference type="InterPro" id="IPR017703">
    <property type="entry name" value="YgfZ/GcvT_CS"/>
</dbReference>
<dbReference type="InterPro" id="IPR048451">
    <property type="entry name" value="YgfZ_barrel"/>
</dbReference>
<dbReference type="NCBIfam" id="NF007110">
    <property type="entry name" value="PRK09559.1"/>
    <property type="match status" value="1"/>
</dbReference>
<dbReference type="NCBIfam" id="TIGR03317">
    <property type="entry name" value="ygfZ_signature"/>
    <property type="match status" value="1"/>
</dbReference>
<dbReference type="PANTHER" id="PTHR22602">
    <property type="entry name" value="TRANSFERASE CAF17, MITOCHONDRIAL-RELATED"/>
    <property type="match status" value="1"/>
</dbReference>
<dbReference type="PANTHER" id="PTHR22602:SF0">
    <property type="entry name" value="TRANSFERASE CAF17, MITOCHONDRIAL-RELATED"/>
    <property type="match status" value="1"/>
</dbReference>
<dbReference type="Pfam" id="PF01571">
    <property type="entry name" value="GCV_T"/>
    <property type="match status" value="1"/>
</dbReference>
<dbReference type="Pfam" id="PF21130">
    <property type="entry name" value="YgfZ_barrel"/>
    <property type="match status" value="1"/>
</dbReference>
<dbReference type="SUPFAM" id="SSF101790">
    <property type="entry name" value="Aminomethyltransferase beta-barrel domain"/>
    <property type="match status" value="1"/>
</dbReference>
<dbReference type="SUPFAM" id="SSF103025">
    <property type="entry name" value="Folate-binding domain"/>
    <property type="match status" value="1"/>
</dbReference>
<evidence type="ECO:0000255" key="1">
    <source>
        <dbReference type="HAMAP-Rule" id="MF_01175"/>
    </source>
</evidence>